<protein>
    <recommendedName>
        <fullName>Beta-2-glycoprotein 1</fullName>
    </recommendedName>
    <alternativeName>
        <fullName>APC inhibitor</fullName>
    </alternativeName>
    <alternativeName>
        <fullName>Activated protein C-binding protein</fullName>
    </alternativeName>
    <alternativeName>
        <fullName>Anticardiolipin cofactor</fullName>
    </alternativeName>
    <alternativeName>
        <fullName>Apolipoprotein H</fullName>
        <shortName>Apo-H</shortName>
    </alternativeName>
    <alternativeName>
        <fullName>Beta-2-glycoprotein I</fullName>
        <shortName>B2GPI</shortName>
        <shortName>Beta(2)GPI</shortName>
    </alternativeName>
</protein>
<organism>
    <name type="scientific">Homo sapiens</name>
    <name type="common">Human</name>
    <dbReference type="NCBI Taxonomy" id="9606"/>
    <lineage>
        <taxon>Eukaryota</taxon>
        <taxon>Metazoa</taxon>
        <taxon>Chordata</taxon>
        <taxon>Craniata</taxon>
        <taxon>Vertebrata</taxon>
        <taxon>Euteleostomi</taxon>
        <taxon>Mammalia</taxon>
        <taxon>Eutheria</taxon>
        <taxon>Euarchontoglires</taxon>
        <taxon>Primates</taxon>
        <taxon>Haplorrhini</taxon>
        <taxon>Catarrhini</taxon>
        <taxon>Hominidae</taxon>
        <taxon>Homo</taxon>
    </lineage>
</organism>
<feature type="signal peptide" evidence="3 7 13 14">
    <location>
        <begin position="1"/>
        <end position="19"/>
    </location>
</feature>
<feature type="chain" id="PRO_0000002059" description="Beta-2-glycoprotein 1">
    <location>
        <begin position="20"/>
        <end position="345"/>
    </location>
</feature>
<feature type="domain" description="Sushi 1" evidence="2">
    <location>
        <begin position="21"/>
        <end position="81"/>
    </location>
</feature>
<feature type="domain" description="Sushi 2" evidence="2">
    <location>
        <begin position="82"/>
        <end position="139"/>
    </location>
</feature>
<feature type="domain" description="Sushi 3" evidence="2">
    <location>
        <begin position="140"/>
        <end position="202"/>
    </location>
</feature>
<feature type="domain" description="Sushi 4" evidence="2">
    <location>
        <begin position="203"/>
        <end position="262"/>
    </location>
</feature>
<feature type="region of interest" description="Sushi-like">
    <location>
        <begin position="263"/>
        <end position="345"/>
    </location>
</feature>
<feature type="glycosylation site" description="O-linked (GalNAc...) threonine" evidence="1">
    <location>
        <position position="33"/>
    </location>
</feature>
<feature type="glycosylation site" description="O-linked (GalNAc...) threonine">
    <location>
        <position position="149"/>
    </location>
</feature>
<feature type="glycosylation site" description="N-linked (GlcNAc...) (complex) asparagine" evidence="5 6 8 9 10 11 12 14">
    <location>
        <position position="162"/>
    </location>
</feature>
<feature type="glycosylation site" description="N-linked (GlcNAc...) asparagine" evidence="5 8 11 14">
    <location>
        <position position="183"/>
    </location>
</feature>
<feature type="glycosylation site" description="N-linked (GlcNAc...) asparagine" evidence="5 8 11 14">
    <location>
        <position position="193"/>
    </location>
</feature>
<feature type="glycosylation site" description="N-linked (GlcNAc...) asparagine" evidence="6 8 9 11 14">
    <location>
        <position position="253"/>
    </location>
</feature>
<feature type="disulfide bond">
    <location>
        <begin position="23"/>
        <end position="66"/>
    </location>
</feature>
<feature type="disulfide bond">
    <location>
        <begin position="51"/>
        <end position="79"/>
    </location>
</feature>
<feature type="disulfide bond">
    <location>
        <begin position="84"/>
        <end position="124"/>
    </location>
</feature>
<feature type="disulfide bond">
    <location>
        <begin position="110"/>
        <end position="137"/>
    </location>
</feature>
<feature type="disulfide bond">
    <location>
        <begin position="142"/>
        <end position="188"/>
    </location>
</feature>
<feature type="disulfide bond">
    <location>
        <begin position="174"/>
        <end position="200"/>
    </location>
</feature>
<feature type="disulfide bond">
    <location>
        <begin position="205"/>
        <end position="248"/>
    </location>
</feature>
<feature type="disulfide bond">
    <location>
        <begin position="234"/>
        <end position="260"/>
    </location>
</feature>
<feature type="disulfide bond">
    <location>
        <begin position="264"/>
        <end position="315"/>
    </location>
</feature>
<feature type="disulfide bond">
    <location>
        <begin position="300"/>
        <end position="325"/>
    </location>
</feature>
<feature type="disulfide bond">
    <location>
        <begin position="307"/>
        <end position="345"/>
    </location>
</feature>
<feature type="sequence variant" id="VAR_048316" description="In dbSNP:rs3826358.">
    <original>V</original>
    <variation>A</variation>
    <location>
        <position position="5"/>
    </location>
</feature>
<feature type="sequence variant" id="VAR_008169" description="In allele APOH*1; dbSNP:rs1801692." evidence="4 17 18">
    <original>S</original>
    <variation>N</variation>
    <location>
        <position position="107"/>
    </location>
</feature>
<feature type="sequence variant" id="VAR_019155" description="In dbSNP:rs8178847." evidence="18">
    <original>R</original>
    <variation>H</variation>
    <location>
        <position position="154"/>
    </location>
</feature>
<feature type="sequence variant" id="VAR_000673" description="In dbSNP:rs4581." evidence="15 18">
    <original>V</original>
    <variation>L</variation>
    <location>
        <position position="266"/>
    </location>
</feature>
<feature type="sequence variant" id="VAR_008170" description="Loss of phosphatidylserine-binding; dbSNP:rs1801689." evidence="16">
    <original>C</original>
    <variation>G</variation>
    <location>
        <position position="325"/>
    </location>
</feature>
<feature type="sequence variant" id="VAR_008171" description="In allele APOH*3W; loss of phosphatidylserine-binding; dbSNP:rs1801690." evidence="16 18">
    <original>W</original>
    <variation>S</variation>
    <location>
        <position position="335"/>
    </location>
</feature>
<feature type="sequence conflict" description="In Ref. 10; AA sequence." evidence="19" ref="10">
    <original>S</original>
    <variation>C</variation>
    <location>
        <position position="121"/>
    </location>
</feature>
<feature type="sequence conflict" description="In Ref. 10; AA sequence." evidence="19" ref="10">
    <original>C</original>
    <variation>N</variation>
    <location>
        <position position="188"/>
    </location>
</feature>
<feature type="strand" evidence="23">
    <location>
        <begin position="22"/>
        <end position="24"/>
    </location>
</feature>
<feature type="strand" evidence="22">
    <location>
        <begin position="32"/>
        <end position="36"/>
    </location>
</feature>
<feature type="strand" evidence="22">
    <location>
        <begin position="39"/>
        <end position="41"/>
    </location>
</feature>
<feature type="strand" evidence="22">
    <location>
        <begin position="46"/>
        <end position="51"/>
    </location>
</feature>
<feature type="strand" evidence="22">
    <location>
        <begin position="55"/>
        <end position="57"/>
    </location>
</feature>
<feature type="strand" evidence="22">
    <location>
        <begin position="62"/>
        <end position="65"/>
    </location>
</feature>
<feature type="strand" evidence="25">
    <location>
        <begin position="68"/>
        <end position="70"/>
    </location>
</feature>
<feature type="strand" evidence="22">
    <location>
        <begin position="79"/>
        <end position="81"/>
    </location>
</feature>
<feature type="strand" evidence="22">
    <location>
        <begin position="93"/>
        <end position="96"/>
    </location>
</feature>
<feature type="strand" evidence="24">
    <location>
        <begin position="101"/>
        <end position="103"/>
    </location>
</feature>
<feature type="strand" evidence="22">
    <location>
        <begin position="105"/>
        <end position="110"/>
    </location>
</feature>
<feature type="strand" evidence="22">
    <location>
        <begin position="114"/>
        <end position="118"/>
    </location>
</feature>
<feature type="strand" evidence="22">
    <location>
        <begin position="120"/>
        <end position="124"/>
    </location>
</feature>
<feature type="strand" evidence="22">
    <location>
        <begin position="128"/>
        <end position="132"/>
    </location>
</feature>
<feature type="strand" evidence="22">
    <location>
        <begin position="136"/>
        <end position="139"/>
    </location>
</feature>
<feature type="strand" evidence="22">
    <location>
        <begin position="151"/>
        <end position="155"/>
    </location>
</feature>
<feature type="strand" evidence="22">
    <location>
        <begin position="163"/>
        <end position="165"/>
    </location>
</feature>
<feature type="strand" evidence="22">
    <location>
        <begin position="169"/>
        <end position="174"/>
    </location>
</feature>
<feature type="strand" evidence="22">
    <location>
        <begin position="178"/>
        <end position="182"/>
    </location>
</feature>
<feature type="strand" evidence="22">
    <location>
        <begin position="184"/>
        <end position="188"/>
    </location>
</feature>
<feature type="strand" evidence="22">
    <location>
        <begin position="192"/>
        <end position="195"/>
    </location>
</feature>
<feature type="strand" evidence="22">
    <location>
        <begin position="199"/>
        <end position="202"/>
    </location>
</feature>
<feature type="strand" evidence="22">
    <location>
        <begin position="214"/>
        <end position="217"/>
    </location>
</feature>
<feature type="strand" evidence="22">
    <location>
        <begin position="220"/>
        <end position="222"/>
    </location>
</feature>
<feature type="strand" evidence="22">
    <location>
        <begin position="229"/>
        <end position="234"/>
    </location>
</feature>
<feature type="strand" evidence="22">
    <location>
        <begin position="238"/>
        <end position="242"/>
    </location>
</feature>
<feature type="strand" evidence="22">
    <location>
        <begin position="244"/>
        <end position="248"/>
    </location>
</feature>
<feature type="strand" evidence="22">
    <location>
        <begin position="252"/>
        <end position="255"/>
    </location>
</feature>
<feature type="strand" evidence="22">
    <location>
        <begin position="260"/>
        <end position="262"/>
    </location>
</feature>
<feature type="strand" evidence="21">
    <location>
        <begin position="267"/>
        <end position="270"/>
    </location>
</feature>
<feature type="strand" evidence="21">
    <location>
        <begin position="272"/>
        <end position="275"/>
    </location>
</feature>
<feature type="strand" evidence="21">
    <location>
        <begin position="278"/>
        <end position="281"/>
    </location>
</feature>
<feature type="helix" evidence="21">
    <location>
        <begin position="282"/>
        <end position="285"/>
    </location>
</feature>
<feature type="turn" evidence="21">
    <location>
        <begin position="286"/>
        <end position="288"/>
    </location>
</feature>
<feature type="strand" evidence="21">
    <location>
        <begin position="295"/>
        <end position="302"/>
    </location>
</feature>
<feature type="turn" evidence="21">
    <location>
        <begin position="303"/>
        <end position="306"/>
    </location>
</feature>
<feature type="strand" evidence="21">
    <location>
        <begin position="307"/>
        <end position="316"/>
    </location>
</feature>
<feature type="turn" evidence="20">
    <location>
        <begin position="331"/>
        <end position="333"/>
    </location>
</feature>
<feature type="helix" evidence="21">
    <location>
        <begin position="339"/>
        <end position="341"/>
    </location>
</feature>
<comment type="function">
    <text>Binds to various kinds of negatively charged substances such as heparin, phospholipids, and dextran sulfate. May prevent activation of the intrinsic blood coagulation cascade by binding to phospholipids on the surface of damaged cells.</text>
</comment>
<comment type="interaction">
    <interactant intactId="EBI-2114682">
        <id>P02749</id>
    </interactant>
    <interactant intactId="EBI-2114682">
        <id>P02749</id>
        <label>APOH</label>
    </interactant>
    <organismsDiffer>false</organismsDiffer>
    <experiments>2</experiments>
</comment>
<comment type="interaction">
    <interactant intactId="EBI-2114682">
        <id>P02749</id>
    </interactant>
    <interactant intactId="EBI-21591415">
        <id>P13473-2</id>
        <label>LAMP2</label>
    </interactant>
    <organismsDiffer>false</organismsDiffer>
    <experiments>3</experiments>
</comment>
<comment type="interaction">
    <interactant intactId="EBI-2114682">
        <id>P02749</id>
    </interactant>
    <interactant intactId="EBI-988319">
        <id>P01130</id>
        <label>LDLR</label>
    </interactant>
    <organismsDiffer>false</organismsDiffer>
    <experiments>3</experiments>
</comment>
<comment type="interaction">
    <interactant intactId="EBI-2114682">
        <id>P02749</id>
    </interactant>
    <interactant intactId="EBI-9232288">
        <id>P08519</id>
        <label>LPA</label>
    </interactant>
    <organismsDiffer>false</organismsDiffer>
    <experiments>4</experiments>
</comment>
<comment type="interaction">
    <interactant intactId="EBI-2114682">
        <id>P02749</id>
    </interactant>
    <interactant intactId="EBI-5325353">
        <id>P11226</id>
        <label>MBL2</label>
    </interactant>
    <organismsDiffer>false</organismsDiffer>
    <experiments>3</experiments>
</comment>
<comment type="interaction">
    <interactant intactId="EBI-2114682">
        <id>P02749</id>
    </interactant>
    <interactant intactId="EBI-2565740">
        <id>P02776</id>
        <label>PF4</label>
    </interactant>
    <organismsDiffer>false</organismsDiffer>
    <experiments>2</experiments>
</comment>
<comment type="interaction">
    <interactant intactId="EBI-2114682">
        <id>P02749</id>
    </interactant>
    <interactant intactId="EBI-999394">
        <id>P00747</id>
        <label>PLG</label>
    </interactant>
    <organismsDiffer>false</organismsDiffer>
    <experiments>2</experiments>
</comment>
<comment type="interaction">
    <interactant intactId="EBI-2114682">
        <id>P02749</id>
    </interactant>
    <interactant intactId="EBI-2623095">
        <id>Q9Y371</id>
        <label>SH3GLB1</label>
    </interactant>
    <organismsDiffer>false</organismsDiffer>
    <experiments>3</experiments>
</comment>
<comment type="interaction">
    <interactant intactId="EBI-2114682">
        <id>P02749</id>
    </interactant>
    <interactant intactId="EBI-432319">
        <id>Q924X6</id>
        <label>Lrp8</label>
    </interactant>
    <organismsDiffer>true</organismsDiffer>
    <experiments>2</experiments>
</comment>
<comment type="interaction">
    <interactant intactId="EBI-11809989">
        <id>PRO_0000002059</id>
    </interactant>
    <interactant intactId="EBI-11809989">
        <id>PRO_0000002059</id>
        <label>APOH</label>
        <dbReference type="UniProtKB" id="P02749"/>
    </interactant>
    <organismsDiffer>false</organismsDiffer>
    <experiments>2</experiments>
</comment>
<comment type="interaction">
    <interactant intactId="EBI-11809989">
        <id>PRO_0000002059</id>
    </interactant>
    <interactant intactId="EBI-11809981">
        <id>PRO_0000005068</id>
        <label>PF4</label>
        <dbReference type="UniProtKB" id="P02776"/>
    </interactant>
    <organismsDiffer>false</organismsDiffer>
    <experiments>4</experiments>
</comment>
<comment type="subcellular location">
    <subcellularLocation>
        <location>Secreted</location>
    </subcellularLocation>
</comment>
<comment type="tissue specificity">
    <text>Expressed by the liver and secreted in plasma.</text>
</comment>
<comment type="PTM">
    <text evidence="5 6 8 9 10 11 12 14">N- and O-glycosylated. PubMed:6587378 also reports glycosylation on 'Asn-188' for their allele.</text>
</comment>
<name>APOH_HUMAN</name>
<sequence length="345" mass="38298">MISPVLILFSSFLCHVAIAGRTCPKPDDLPFSTVVPLKTFYEPGEEITYSCKPGYVSRGGMRKFICPLTGLWPINTLKCTPRVCPFAGILENGAVRYTTFEYPNTISFSCNTGFYLNGADSAKCTEEGKWSPELPVCAPIICPPPSIPTFATLRVYKPSAGNNSLYRDTAVFECLPQHAMFGNDTITCTTHGNWTKLPECREVKCPFPSRPDNGFVNYPAKPTLYYKDKATFGCHDGYSLDGPEEIECTKLGNWSAMPSCKASCKVPVKKATVVYQGERVKIQEKFKNGMLHGDKVSFFCKNKEKKCSYTEDAQCIDGTIEVPKCFKEHSSLAFWKTDASDVKPC</sequence>
<gene>
    <name type="primary">APOH</name>
    <name type="synonym">B2G1</name>
</gene>
<evidence type="ECO:0000250" key="1">
    <source>
        <dbReference type="UniProtKB" id="P17690"/>
    </source>
</evidence>
<evidence type="ECO:0000255" key="2">
    <source>
        <dbReference type="PROSITE-ProRule" id="PRU00302"/>
    </source>
</evidence>
<evidence type="ECO:0000269" key="3">
    <source>
    </source>
</evidence>
<evidence type="ECO:0000269" key="4">
    <source>
    </source>
</evidence>
<evidence type="ECO:0000269" key="5">
    <source>
    </source>
</evidence>
<evidence type="ECO:0000269" key="6">
    <source>
    </source>
</evidence>
<evidence type="ECO:0000269" key="7">
    <source>
    </source>
</evidence>
<evidence type="ECO:0000269" key="8">
    <source>
    </source>
</evidence>
<evidence type="ECO:0000269" key="9">
    <source>
    </source>
</evidence>
<evidence type="ECO:0000269" key="10">
    <source>
    </source>
</evidence>
<evidence type="ECO:0000269" key="11">
    <source>
    </source>
</evidence>
<evidence type="ECO:0000269" key="12">
    <source>
    </source>
</evidence>
<evidence type="ECO:0000269" key="13">
    <source>
    </source>
</evidence>
<evidence type="ECO:0000269" key="14">
    <source>
    </source>
</evidence>
<evidence type="ECO:0000269" key="15">
    <source>
    </source>
</evidence>
<evidence type="ECO:0000269" key="16">
    <source>
    </source>
</evidence>
<evidence type="ECO:0000269" key="17">
    <source>
    </source>
</evidence>
<evidence type="ECO:0000269" key="18">
    <source ref="8"/>
</evidence>
<evidence type="ECO:0000305" key="19"/>
<evidence type="ECO:0007829" key="20">
    <source>
        <dbReference type="PDB" id="1C1Z"/>
    </source>
</evidence>
<evidence type="ECO:0007829" key="21">
    <source>
        <dbReference type="PDB" id="3OP8"/>
    </source>
</evidence>
<evidence type="ECO:0007829" key="22">
    <source>
        <dbReference type="PDB" id="6V06"/>
    </source>
</evidence>
<evidence type="ECO:0007829" key="23">
    <source>
        <dbReference type="PDB" id="6XSD"/>
    </source>
</evidence>
<evidence type="ECO:0007829" key="24">
    <source>
        <dbReference type="PDB" id="7JIK"/>
    </source>
</evidence>
<evidence type="ECO:0007829" key="25">
    <source>
        <dbReference type="PDB" id="7KG4"/>
    </source>
</evidence>
<accession>P02749</accession>
<accession>B2R9M3</accession>
<accession>Q9UCN7</accession>
<proteinExistence type="evidence at protein level"/>
<keyword id="KW-0002">3D-structure</keyword>
<keyword id="KW-0903">Direct protein sequencing</keyword>
<keyword id="KW-1015">Disulfide bond</keyword>
<keyword id="KW-0325">Glycoprotein</keyword>
<keyword id="KW-0358">Heparin-binding</keyword>
<keyword id="KW-1267">Proteomics identification</keyword>
<keyword id="KW-1185">Reference proteome</keyword>
<keyword id="KW-0677">Repeat</keyword>
<keyword id="KW-0964">Secreted</keyword>
<keyword id="KW-0732">Signal</keyword>
<keyword id="KW-0768">Sushi</keyword>
<dbReference type="EMBL" id="X58100">
    <property type="protein sequence ID" value="CAA41113.1"/>
    <property type="molecule type" value="mRNA"/>
</dbReference>
<dbReference type="EMBL" id="X53595">
    <property type="protein sequence ID" value="CAA37664.1"/>
    <property type="molecule type" value="mRNA"/>
</dbReference>
<dbReference type="EMBL" id="X57847">
    <property type="protein sequence ID" value="CAA40977.1"/>
    <property type="molecule type" value="mRNA"/>
</dbReference>
<dbReference type="EMBL" id="M62839">
    <property type="protein sequence ID" value="AAA51766.1"/>
    <property type="molecule type" value="mRNA"/>
</dbReference>
<dbReference type="EMBL" id="S80305">
    <property type="protein sequence ID" value="AAB21330.1"/>
    <property type="molecule type" value="mRNA"/>
</dbReference>
<dbReference type="EMBL" id="Y11493">
    <property type="protein sequence ID" value="CAA72279.1"/>
    <property type="molecule type" value="Genomic_DNA"/>
</dbReference>
<dbReference type="EMBL" id="Y11494">
    <property type="protein sequence ID" value="CAA72279.1"/>
    <property type="status" value="JOINED"/>
    <property type="molecule type" value="Genomic_DNA"/>
</dbReference>
<dbReference type="EMBL" id="Y11495">
    <property type="protein sequence ID" value="CAA72279.1"/>
    <property type="status" value="JOINED"/>
    <property type="molecule type" value="Genomic_DNA"/>
</dbReference>
<dbReference type="EMBL" id="X53595">
    <property type="protein sequence ID" value="CAA72279.1"/>
    <property type="status" value="JOINED"/>
    <property type="molecule type" value="mRNA"/>
</dbReference>
<dbReference type="EMBL" id="Y11496">
    <property type="protein sequence ID" value="CAA72279.1"/>
    <property type="status" value="JOINED"/>
    <property type="molecule type" value="Genomic_DNA"/>
</dbReference>
<dbReference type="EMBL" id="Y11497">
    <property type="protein sequence ID" value="CAA72279.1"/>
    <property type="status" value="JOINED"/>
    <property type="molecule type" value="Genomic_DNA"/>
</dbReference>
<dbReference type="EMBL" id="Y11498">
    <property type="protein sequence ID" value="CAA72279.1"/>
    <property type="status" value="JOINED"/>
    <property type="molecule type" value="Genomic_DNA"/>
</dbReference>
<dbReference type="EMBL" id="Y17754">
    <property type="protein sequence ID" value="CAA76845.1"/>
    <property type="molecule type" value="Genomic_DNA"/>
</dbReference>
<dbReference type="EMBL" id="AK313838">
    <property type="protein sequence ID" value="BAG36570.1"/>
    <property type="molecule type" value="mRNA"/>
</dbReference>
<dbReference type="EMBL" id="AY322156">
    <property type="protein sequence ID" value="AAP72014.1"/>
    <property type="molecule type" value="Genomic_DNA"/>
</dbReference>
<dbReference type="EMBL" id="BC020703">
    <property type="protein sequence ID" value="AAH20703.1"/>
    <property type="molecule type" value="mRNA"/>
</dbReference>
<dbReference type="EMBL" id="BC026283">
    <property type="protein sequence ID" value="AAH26283.1"/>
    <property type="molecule type" value="mRNA"/>
</dbReference>
<dbReference type="CCDS" id="CCDS11663.1"/>
<dbReference type="PIR" id="S17178">
    <property type="entry name" value="NBHU"/>
</dbReference>
<dbReference type="RefSeq" id="NP_000033.2">
    <property type="nucleotide sequence ID" value="NM_000042.3"/>
</dbReference>
<dbReference type="PDB" id="1C1Z">
    <property type="method" value="X-ray"/>
    <property type="resolution" value="2.87 A"/>
    <property type="chains" value="A=20-345"/>
</dbReference>
<dbReference type="PDB" id="1G4F">
    <property type="method" value="NMR"/>
    <property type="chains" value="A=261-345"/>
</dbReference>
<dbReference type="PDB" id="1G4G">
    <property type="method" value="NMR"/>
    <property type="chains" value="A=261-345"/>
</dbReference>
<dbReference type="PDB" id="1QUB">
    <property type="method" value="X-ray"/>
    <property type="resolution" value="2.70 A"/>
    <property type="chains" value="A=20-345"/>
</dbReference>
<dbReference type="PDB" id="2KRI">
    <property type="method" value="NMR"/>
    <property type="chains" value="A=263-345"/>
</dbReference>
<dbReference type="PDB" id="3OP8">
    <property type="method" value="X-ray"/>
    <property type="resolution" value="1.90 A"/>
    <property type="chains" value="A/B=263-345"/>
</dbReference>
<dbReference type="PDB" id="4JHS">
    <property type="method" value="X-ray"/>
    <property type="resolution" value="3.00 A"/>
    <property type="chains" value="A=203-345"/>
</dbReference>
<dbReference type="PDB" id="6V06">
    <property type="method" value="X-ray"/>
    <property type="resolution" value="2.40 A"/>
    <property type="chains" value="A=20-345"/>
</dbReference>
<dbReference type="PDB" id="6V08">
    <property type="method" value="X-ray"/>
    <property type="resolution" value="2.58 A"/>
    <property type="chains" value="A=20-345"/>
</dbReference>
<dbReference type="PDB" id="6V09">
    <property type="method" value="X-ray"/>
    <property type="resolution" value="2.99 A"/>
    <property type="chains" value="A=20-345"/>
</dbReference>
<dbReference type="PDB" id="6XSD">
    <property type="method" value="X-ray"/>
    <property type="resolution" value="2.54 A"/>
    <property type="chains" value="A=20-345"/>
</dbReference>
<dbReference type="PDB" id="6XST">
    <property type="method" value="X-ray"/>
    <property type="resolution" value="2.92 A"/>
    <property type="chains" value="A=20-345"/>
</dbReference>
<dbReference type="PDB" id="7JIK">
    <property type="method" value="X-ray"/>
    <property type="resolution" value="2.69 A"/>
    <property type="chains" value="A=20-345"/>
</dbReference>
<dbReference type="PDB" id="7KG4">
    <property type="method" value="X-ray"/>
    <property type="resolution" value="3.30 A"/>
    <property type="chains" value="A/B=20-345"/>
</dbReference>
<dbReference type="PDBsum" id="1C1Z"/>
<dbReference type="PDBsum" id="1G4F"/>
<dbReference type="PDBsum" id="1G4G"/>
<dbReference type="PDBsum" id="1QUB"/>
<dbReference type="PDBsum" id="2KRI"/>
<dbReference type="PDBsum" id="3OP8"/>
<dbReference type="PDBsum" id="4JHS"/>
<dbReference type="PDBsum" id="6V06"/>
<dbReference type="PDBsum" id="6V08"/>
<dbReference type="PDBsum" id="6V09"/>
<dbReference type="PDBsum" id="6XSD"/>
<dbReference type="PDBsum" id="6XST"/>
<dbReference type="PDBsum" id="7JIK"/>
<dbReference type="PDBsum" id="7KG4"/>
<dbReference type="BMRB" id="P02749"/>
<dbReference type="SMR" id="P02749"/>
<dbReference type="BioGRID" id="106847">
    <property type="interactions" value="29"/>
</dbReference>
<dbReference type="DIP" id="DIP-46878N"/>
<dbReference type="FunCoup" id="P02749">
    <property type="interactions" value="49"/>
</dbReference>
<dbReference type="IntAct" id="P02749">
    <property type="interactions" value="25"/>
</dbReference>
<dbReference type="MINT" id="P02749"/>
<dbReference type="STRING" id="9606.ENSP00000205948"/>
<dbReference type="DrugBank" id="DB09130">
    <property type="generic name" value="Copper"/>
</dbReference>
<dbReference type="DrugBank" id="DB05446">
    <property type="generic name" value="LJP 1082"/>
</dbReference>
<dbReference type="GlyConnect" id="678">
    <property type="glycosylation" value="41 N-Linked glycans (4 sites)"/>
</dbReference>
<dbReference type="GlyCosmos" id="P02749">
    <property type="glycosylation" value="7 sites, 53 glycans"/>
</dbReference>
<dbReference type="GlyGen" id="P02749">
    <property type="glycosylation" value="7 sites, 138 N-linked glycans (3 sites), 1 O-linked glycan (1 site)"/>
</dbReference>
<dbReference type="iPTMnet" id="P02749"/>
<dbReference type="PhosphoSitePlus" id="P02749"/>
<dbReference type="SwissPalm" id="P02749"/>
<dbReference type="BioMuta" id="APOH"/>
<dbReference type="DMDM" id="543826"/>
<dbReference type="CPTAC" id="CPTAC-654"/>
<dbReference type="CPTAC" id="non-CPTAC-1090"/>
<dbReference type="jPOST" id="P02749"/>
<dbReference type="MassIVE" id="P02749"/>
<dbReference type="PaxDb" id="9606-ENSP00000205948"/>
<dbReference type="PeptideAtlas" id="P02749"/>
<dbReference type="PRIDE" id="P02749"/>
<dbReference type="ProteomicsDB" id="51565"/>
<dbReference type="TopDownProteomics" id="P02749"/>
<dbReference type="ABCD" id="P02749">
    <property type="antibodies" value="4 sequenced antibodies"/>
</dbReference>
<dbReference type="Antibodypedia" id="874">
    <property type="antibodies" value="580 antibodies from 42 providers"/>
</dbReference>
<dbReference type="DNASU" id="350"/>
<dbReference type="Ensembl" id="ENST00000205948.11">
    <property type="protein sequence ID" value="ENSP00000205948.6"/>
    <property type="gene ID" value="ENSG00000091583.11"/>
</dbReference>
<dbReference type="GeneID" id="350"/>
<dbReference type="KEGG" id="hsa:350"/>
<dbReference type="MANE-Select" id="ENST00000205948.11">
    <property type="protein sequence ID" value="ENSP00000205948.6"/>
    <property type="RefSeq nucleotide sequence ID" value="NM_000042.3"/>
    <property type="RefSeq protein sequence ID" value="NP_000033.2"/>
</dbReference>
<dbReference type="UCSC" id="uc002jfn.5">
    <property type="organism name" value="human"/>
</dbReference>
<dbReference type="AGR" id="HGNC:616"/>
<dbReference type="CTD" id="350"/>
<dbReference type="DisGeNET" id="350"/>
<dbReference type="GeneCards" id="APOH"/>
<dbReference type="HGNC" id="HGNC:616">
    <property type="gene designation" value="APOH"/>
</dbReference>
<dbReference type="HPA" id="ENSG00000091583">
    <property type="expression patterns" value="Tissue enriched (liver)"/>
</dbReference>
<dbReference type="MalaCards" id="APOH"/>
<dbReference type="MIM" id="138700">
    <property type="type" value="gene"/>
</dbReference>
<dbReference type="neXtProt" id="NX_P02749"/>
<dbReference type="OpenTargets" id="ENSG00000091583"/>
<dbReference type="PharmGKB" id="PA24903"/>
<dbReference type="VEuPathDB" id="HostDB:ENSG00000091583"/>
<dbReference type="eggNOG" id="KOG4297">
    <property type="taxonomic scope" value="Eukaryota"/>
</dbReference>
<dbReference type="GeneTree" id="ENSGT00940000157228"/>
<dbReference type="HOGENOM" id="CLU_020107_2_0_1"/>
<dbReference type="InParanoid" id="P02749"/>
<dbReference type="OMA" id="NWSEKPS"/>
<dbReference type="OrthoDB" id="6103690at2759"/>
<dbReference type="PAN-GO" id="P02749">
    <property type="GO annotations" value="0 GO annotations based on evolutionary models"/>
</dbReference>
<dbReference type="PhylomeDB" id="P02749"/>
<dbReference type="TreeFam" id="TF334137"/>
<dbReference type="PathwayCommons" id="P02749"/>
<dbReference type="Reactome" id="R-HSA-114608">
    <property type="pathway name" value="Platelet degranulation"/>
</dbReference>
<dbReference type="SignaLink" id="P02749"/>
<dbReference type="SIGNOR" id="P02749"/>
<dbReference type="BioGRID-ORCS" id="350">
    <property type="hits" value="9 hits in 1151 CRISPR screens"/>
</dbReference>
<dbReference type="ChiTaRS" id="APOH">
    <property type="organism name" value="human"/>
</dbReference>
<dbReference type="EvolutionaryTrace" id="P02749"/>
<dbReference type="GeneWiki" id="Apolipoprotein_H"/>
<dbReference type="GenomeRNAi" id="350"/>
<dbReference type="Pharos" id="P02749">
    <property type="development level" value="Tbio"/>
</dbReference>
<dbReference type="PRO" id="PR:P02749"/>
<dbReference type="Proteomes" id="UP000005640">
    <property type="component" value="Chromosome 17"/>
</dbReference>
<dbReference type="RNAct" id="P02749">
    <property type="molecule type" value="protein"/>
</dbReference>
<dbReference type="Bgee" id="ENSG00000091583">
    <property type="expression patterns" value="Expressed in liver and 126 other cell types or tissues"/>
</dbReference>
<dbReference type="ExpressionAtlas" id="P02749">
    <property type="expression patterns" value="baseline and differential"/>
</dbReference>
<dbReference type="GO" id="GO:0009986">
    <property type="term" value="C:cell surface"/>
    <property type="evidence" value="ECO:0000314"/>
    <property type="project" value="BHF-UCL"/>
</dbReference>
<dbReference type="GO" id="GO:0042627">
    <property type="term" value="C:chylomicron"/>
    <property type="evidence" value="ECO:0000314"/>
    <property type="project" value="BHF-UCL"/>
</dbReference>
<dbReference type="GO" id="GO:0062023">
    <property type="term" value="C:collagen-containing extracellular matrix"/>
    <property type="evidence" value="ECO:0007005"/>
    <property type="project" value="BHF-UCL"/>
</dbReference>
<dbReference type="GO" id="GO:0070062">
    <property type="term" value="C:extracellular exosome"/>
    <property type="evidence" value="ECO:0007005"/>
    <property type="project" value="UniProtKB"/>
</dbReference>
<dbReference type="GO" id="GO:0005576">
    <property type="term" value="C:extracellular region"/>
    <property type="evidence" value="ECO:0007005"/>
    <property type="project" value="BHF-UCL"/>
</dbReference>
<dbReference type="GO" id="GO:0005615">
    <property type="term" value="C:extracellular space"/>
    <property type="evidence" value="ECO:0000314"/>
    <property type="project" value="BHF-UCL"/>
</dbReference>
<dbReference type="GO" id="GO:0034364">
    <property type="term" value="C:high-density lipoprotein particle"/>
    <property type="evidence" value="ECO:0000314"/>
    <property type="project" value="BHF-UCL"/>
</dbReference>
<dbReference type="GO" id="GO:0031089">
    <property type="term" value="C:platelet dense granule lumen"/>
    <property type="evidence" value="ECO:0000304"/>
    <property type="project" value="Reactome"/>
</dbReference>
<dbReference type="GO" id="GO:0034361">
    <property type="term" value="C:very-low-density lipoprotein particle"/>
    <property type="evidence" value="ECO:0000314"/>
    <property type="project" value="BHF-UCL"/>
</dbReference>
<dbReference type="GO" id="GO:0008201">
    <property type="term" value="F:heparin binding"/>
    <property type="evidence" value="ECO:0007669"/>
    <property type="project" value="UniProtKB-KW"/>
</dbReference>
<dbReference type="GO" id="GO:0042802">
    <property type="term" value="F:identical protein binding"/>
    <property type="evidence" value="ECO:0000353"/>
    <property type="project" value="IntAct"/>
</dbReference>
<dbReference type="GO" id="GO:0035473">
    <property type="term" value="F:lipase binding"/>
    <property type="evidence" value="ECO:0000353"/>
    <property type="project" value="BHF-UCL"/>
</dbReference>
<dbReference type="GO" id="GO:0008289">
    <property type="term" value="F:lipid binding"/>
    <property type="evidence" value="ECO:0000314"/>
    <property type="project" value="BHF-UCL"/>
</dbReference>
<dbReference type="GO" id="GO:0060230">
    <property type="term" value="F:lipoprotein lipase activator activity"/>
    <property type="evidence" value="ECO:0000314"/>
    <property type="project" value="BHF-UCL"/>
</dbReference>
<dbReference type="GO" id="GO:0005543">
    <property type="term" value="F:phospholipid binding"/>
    <property type="evidence" value="ECO:0000314"/>
    <property type="project" value="BHF-UCL"/>
</dbReference>
<dbReference type="GO" id="GO:0007597">
    <property type="term" value="P:blood coagulation, intrinsic pathway"/>
    <property type="evidence" value="ECO:0000314"/>
    <property type="project" value="BHF-UCL"/>
</dbReference>
<dbReference type="GO" id="GO:0034371">
    <property type="term" value="P:chylomicron remodeling"/>
    <property type="evidence" value="ECO:0000314"/>
    <property type="project" value="BHF-UCL"/>
</dbReference>
<dbReference type="GO" id="GO:0016525">
    <property type="term" value="P:negative regulation of angiogenesis"/>
    <property type="evidence" value="ECO:0000314"/>
    <property type="project" value="BHF-UCL"/>
</dbReference>
<dbReference type="GO" id="GO:0030195">
    <property type="term" value="P:negative regulation of blood coagulation"/>
    <property type="evidence" value="ECO:0000314"/>
    <property type="project" value="BHF-UCL"/>
</dbReference>
<dbReference type="GO" id="GO:0010596">
    <property type="term" value="P:negative regulation of endothelial cell migration"/>
    <property type="evidence" value="ECO:0000314"/>
    <property type="project" value="BHF-UCL"/>
</dbReference>
<dbReference type="GO" id="GO:0001937">
    <property type="term" value="P:negative regulation of endothelial cell proliferation"/>
    <property type="evidence" value="ECO:0000314"/>
    <property type="project" value="BHF-UCL"/>
</dbReference>
<dbReference type="GO" id="GO:0051918">
    <property type="term" value="P:negative regulation of fibrinolysis"/>
    <property type="evidence" value="ECO:0000314"/>
    <property type="project" value="BHF-UCL"/>
</dbReference>
<dbReference type="GO" id="GO:0033033">
    <property type="term" value="P:negative regulation of myeloid cell apoptotic process"/>
    <property type="evidence" value="ECO:0000314"/>
    <property type="project" value="BHF-UCL"/>
</dbReference>
<dbReference type="GO" id="GO:0034392">
    <property type="term" value="P:negative regulation of smooth muscle cell apoptotic process"/>
    <property type="evidence" value="ECO:0000314"/>
    <property type="project" value="BHF-UCL"/>
</dbReference>
<dbReference type="GO" id="GO:0031639">
    <property type="term" value="P:plasminogen activation"/>
    <property type="evidence" value="ECO:0000314"/>
    <property type="project" value="BHF-UCL"/>
</dbReference>
<dbReference type="GO" id="GO:0030194">
    <property type="term" value="P:positive regulation of blood coagulation"/>
    <property type="evidence" value="ECO:0000304"/>
    <property type="project" value="BHF-UCL"/>
</dbReference>
<dbReference type="GO" id="GO:0090208">
    <property type="term" value="P:positive regulation of triglyceride metabolic process"/>
    <property type="evidence" value="ECO:0000314"/>
    <property type="project" value="BHF-UCL"/>
</dbReference>
<dbReference type="GO" id="GO:0051917">
    <property type="term" value="P:regulation of fibrinolysis"/>
    <property type="evidence" value="ECO:0000314"/>
    <property type="project" value="BHF-UCL"/>
</dbReference>
<dbReference type="GO" id="GO:0034197">
    <property type="term" value="P:triglyceride transport"/>
    <property type="evidence" value="ECO:0000250"/>
    <property type="project" value="BHF-UCL"/>
</dbReference>
<dbReference type="GO" id="GO:0034372">
    <property type="term" value="P:very-low-density lipoprotein particle remodeling"/>
    <property type="evidence" value="ECO:0000314"/>
    <property type="project" value="BHF-UCL"/>
</dbReference>
<dbReference type="CDD" id="cd00033">
    <property type="entry name" value="CCP"/>
    <property type="match status" value="4"/>
</dbReference>
<dbReference type="FunFam" id="2.10.70.10:FF:000083">
    <property type="entry name" value="Beta-2-glycoprotein 1"/>
    <property type="match status" value="1"/>
</dbReference>
<dbReference type="FunFam" id="2.10.70.10:FF:000089">
    <property type="entry name" value="Beta-2-glycoprotein 1"/>
    <property type="match status" value="1"/>
</dbReference>
<dbReference type="FunFam" id="2.10.70.10:FF:000091">
    <property type="entry name" value="Beta-2-glycoprotein 1"/>
    <property type="match status" value="1"/>
</dbReference>
<dbReference type="FunFam" id="2.10.70.10:FF:000096">
    <property type="entry name" value="Beta-2-glycoprotein 1"/>
    <property type="match status" value="1"/>
</dbReference>
<dbReference type="FunFam" id="2.10.70.10:FF:000122">
    <property type="entry name" value="Beta-2-glycoprotein 1"/>
    <property type="match status" value="1"/>
</dbReference>
<dbReference type="Gene3D" id="2.10.70.10">
    <property type="entry name" value="Complement Module, domain 1"/>
    <property type="match status" value="5"/>
</dbReference>
<dbReference type="IDEAL" id="IID00647"/>
<dbReference type="InterPro" id="IPR035976">
    <property type="entry name" value="Sushi/SCR/CCP_sf"/>
</dbReference>
<dbReference type="InterPro" id="IPR015104">
    <property type="entry name" value="Sushi_2"/>
</dbReference>
<dbReference type="InterPro" id="IPR000436">
    <property type="entry name" value="Sushi_SCR_CCP_dom"/>
</dbReference>
<dbReference type="PANTHER" id="PTHR46393:SF7">
    <property type="entry name" value="COMPLEMENT C2"/>
    <property type="match status" value="1"/>
</dbReference>
<dbReference type="PANTHER" id="PTHR46393">
    <property type="entry name" value="SUSHI DOMAIN-CONTAINING PROTEIN"/>
    <property type="match status" value="1"/>
</dbReference>
<dbReference type="Pfam" id="PF00084">
    <property type="entry name" value="Sushi"/>
    <property type="match status" value="4"/>
</dbReference>
<dbReference type="Pfam" id="PF09014">
    <property type="entry name" value="Sushi_2"/>
    <property type="match status" value="1"/>
</dbReference>
<dbReference type="SMART" id="SM00032">
    <property type="entry name" value="CCP"/>
    <property type="match status" value="4"/>
</dbReference>
<dbReference type="SUPFAM" id="SSF57535">
    <property type="entry name" value="Complement control module/SCR domain"/>
    <property type="match status" value="5"/>
</dbReference>
<dbReference type="PROSITE" id="PS50923">
    <property type="entry name" value="SUSHI"/>
    <property type="match status" value="4"/>
</dbReference>
<reference key="1">
    <citation type="journal article" date="1991" name="Biochem. J.">
        <title>Complete nucleotide and deduced amino acid sequence of human beta 2-glycoprotein I.</title>
        <authorList>
            <person name="Steinkasserer A."/>
            <person name="Estaller C."/>
            <person name="Weiss E."/>
            <person name="Sim R.B."/>
            <person name="Day A.J."/>
        </authorList>
    </citation>
    <scope>NUCLEOTIDE SEQUENCE [MRNA]</scope>
    <source>
        <tissue>Liver</tissue>
    </source>
</reference>
<reference key="2">
    <citation type="journal article" date="1991" name="FEBS Lett.">
        <title>Molecular cloning and mammalian expression of human beta 2-glycoprotein I cDNA.</title>
        <authorList>
            <person name="Kristensen T."/>
            <person name="Schousboe I."/>
            <person name="Boel E."/>
            <person name="Mulvihill E.M."/>
            <person name="Hansen R.R."/>
            <person name="Moeller K.B."/>
            <person name="Moeller N.P.H."/>
            <person name="Sottrup-Jensen L."/>
        </authorList>
    </citation>
    <scope>NUCLEOTIDE SEQUENCE [MRNA]</scope>
    <source>
        <tissue>Liver</tissue>
    </source>
</reference>
<reference key="3">
    <citation type="journal article" date="1991" name="Gene">
        <title>Nucleotide sequence and expression of the human gene encoding apolipoprotein H (beta 2-glycoprotein I).</title>
        <authorList>
            <person name="Mehdi H."/>
            <person name="Nunn M."/>
            <person name="Steel D.M."/>
            <person name="Whitehead A.S."/>
            <person name="Perez M."/>
            <person name="Walker L."/>
            <person name="Peeples M.E."/>
        </authorList>
    </citation>
    <scope>NUCLEOTIDE SEQUENCE [MRNA]</scope>
    <source>
        <tissue>Liver</tissue>
    </source>
</reference>
<reference key="4">
    <citation type="journal article" date="1992" name="Int. J. Clin. Lab. Res.">
        <title>Molecular cloning and sequence analysis of the cDNA encoding human apolipoprotein H (beta 2-glycoprotein I).</title>
        <authorList>
            <person name="Day J.R."/>
            <person name="O'Hara P.J."/>
            <person name="Grant F.J."/>
            <person name="Lofton-Day C.E."/>
            <person name="Berkaw M.N."/>
            <person name="Werner P."/>
            <person name="Arnaud P."/>
        </authorList>
    </citation>
    <scope>NUCLEOTIDE SEQUENCE [MRNA]</scope>
</reference>
<reference key="5">
    <citation type="journal article" date="1991" name="Int. Immunol.">
        <title>Molecular definition of human beta 2-glycoprotein I (beta 2-GPI) by cDNA cloning and inter-species differences of beta 2-GPI in alternation of anticardiolipin binding.</title>
        <authorList>
            <person name="Matsuura E."/>
            <person name="Igarashi M."/>
            <person name="Igarashi Y."/>
            <person name="Nagae H."/>
            <person name="Ichikawa K."/>
            <person name="Yasuda T."/>
            <person name="Koike T."/>
        </authorList>
    </citation>
    <scope>NUCLEOTIDE SEQUENCE [MRNA]</scope>
</reference>
<reference key="6">
    <citation type="journal article" date="1999" name="Eur. J. Biochem.">
        <title>Structure of the human beta2-glycoprotein I (apolipoprotein H) gene.</title>
        <authorList>
            <person name="Okkels H."/>
            <person name="Rasmussen T.E."/>
            <person name="Sanghera D.K."/>
            <person name="Kamboh M.I."/>
            <person name="Kristensen T."/>
        </authorList>
    </citation>
    <scope>NUCLEOTIDE SEQUENCE [GENOMIC DNA]</scope>
</reference>
<reference key="7">
    <citation type="journal article" date="2004" name="Nat. Genet.">
        <title>Complete sequencing and characterization of 21,243 full-length human cDNAs.</title>
        <authorList>
            <person name="Ota T."/>
            <person name="Suzuki Y."/>
            <person name="Nishikawa T."/>
            <person name="Otsuki T."/>
            <person name="Sugiyama T."/>
            <person name="Irie R."/>
            <person name="Wakamatsu A."/>
            <person name="Hayashi K."/>
            <person name="Sato H."/>
            <person name="Nagai K."/>
            <person name="Kimura K."/>
            <person name="Makita H."/>
            <person name="Sekine M."/>
            <person name="Obayashi M."/>
            <person name="Nishi T."/>
            <person name="Shibahara T."/>
            <person name="Tanaka T."/>
            <person name="Ishii S."/>
            <person name="Yamamoto J."/>
            <person name="Saito K."/>
            <person name="Kawai Y."/>
            <person name="Isono Y."/>
            <person name="Nakamura Y."/>
            <person name="Nagahari K."/>
            <person name="Murakami K."/>
            <person name="Yasuda T."/>
            <person name="Iwayanagi T."/>
            <person name="Wagatsuma M."/>
            <person name="Shiratori A."/>
            <person name="Sudo H."/>
            <person name="Hosoiri T."/>
            <person name="Kaku Y."/>
            <person name="Kodaira H."/>
            <person name="Kondo H."/>
            <person name="Sugawara M."/>
            <person name="Takahashi M."/>
            <person name="Kanda K."/>
            <person name="Yokoi T."/>
            <person name="Furuya T."/>
            <person name="Kikkawa E."/>
            <person name="Omura Y."/>
            <person name="Abe K."/>
            <person name="Kamihara K."/>
            <person name="Katsuta N."/>
            <person name="Sato K."/>
            <person name="Tanikawa M."/>
            <person name="Yamazaki M."/>
            <person name="Ninomiya K."/>
            <person name="Ishibashi T."/>
            <person name="Yamashita H."/>
            <person name="Murakawa K."/>
            <person name="Fujimori K."/>
            <person name="Tanai H."/>
            <person name="Kimata M."/>
            <person name="Watanabe M."/>
            <person name="Hiraoka S."/>
            <person name="Chiba Y."/>
            <person name="Ishida S."/>
            <person name="Ono Y."/>
            <person name="Takiguchi S."/>
            <person name="Watanabe S."/>
            <person name="Yosida M."/>
            <person name="Hotuta T."/>
            <person name="Kusano J."/>
            <person name="Kanehori K."/>
            <person name="Takahashi-Fujii A."/>
            <person name="Hara H."/>
            <person name="Tanase T.-O."/>
            <person name="Nomura Y."/>
            <person name="Togiya S."/>
            <person name="Komai F."/>
            <person name="Hara R."/>
            <person name="Takeuchi K."/>
            <person name="Arita M."/>
            <person name="Imose N."/>
            <person name="Musashino K."/>
            <person name="Yuuki H."/>
            <person name="Oshima A."/>
            <person name="Sasaki N."/>
            <person name="Aotsuka S."/>
            <person name="Yoshikawa Y."/>
            <person name="Matsunawa H."/>
            <person name="Ichihara T."/>
            <person name="Shiohata N."/>
            <person name="Sano S."/>
            <person name="Moriya S."/>
            <person name="Momiyama H."/>
            <person name="Satoh N."/>
            <person name="Takami S."/>
            <person name="Terashima Y."/>
            <person name="Suzuki O."/>
            <person name="Nakagawa S."/>
            <person name="Senoh A."/>
            <person name="Mizoguchi H."/>
            <person name="Goto Y."/>
            <person name="Shimizu F."/>
            <person name="Wakebe H."/>
            <person name="Hishigaki H."/>
            <person name="Watanabe T."/>
            <person name="Sugiyama A."/>
            <person name="Takemoto M."/>
            <person name="Kawakami B."/>
            <person name="Yamazaki M."/>
            <person name="Watanabe K."/>
            <person name="Kumagai A."/>
            <person name="Itakura S."/>
            <person name="Fukuzumi Y."/>
            <person name="Fujimori Y."/>
            <person name="Komiyama M."/>
            <person name="Tashiro H."/>
            <person name="Tanigami A."/>
            <person name="Fujiwara T."/>
            <person name="Ono T."/>
            <person name="Yamada K."/>
            <person name="Fujii Y."/>
            <person name="Ozaki K."/>
            <person name="Hirao M."/>
            <person name="Ohmori Y."/>
            <person name="Kawabata A."/>
            <person name="Hikiji T."/>
            <person name="Kobatake N."/>
            <person name="Inagaki H."/>
            <person name="Ikema Y."/>
            <person name="Okamoto S."/>
            <person name="Okitani R."/>
            <person name="Kawakami T."/>
            <person name="Noguchi S."/>
            <person name="Itoh T."/>
            <person name="Shigeta K."/>
            <person name="Senba T."/>
            <person name="Matsumura K."/>
            <person name="Nakajima Y."/>
            <person name="Mizuno T."/>
            <person name="Morinaga M."/>
            <person name="Sasaki M."/>
            <person name="Togashi T."/>
            <person name="Oyama M."/>
            <person name="Hata H."/>
            <person name="Watanabe M."/>
            <person name="Komatsu T."/>
            <person name="Mizushima-Sugano J."/>
            <person name="Satoh T."/>
            <person name="Shirai Y."/>
            <person name="Takahashi Y."/>
            <person name="Nakagawa K."/>
            <person name="Okumura K."/>
            <person name="Nagase T."/>
            <person name="Nomura N."/>
            <person name="Kikuchi H."/>
            <person name="Masuho Y."/>
            <person name="Yamashita R."/>
            <person name="Nakai K."/>
            <person name="Yada T."/>
            <person name="Nakamura Y."/>
            <person name="Ohara O."/>
            <person name="Isogai T."/>
            <person name="Sugano S."/>
        </authorList>
    </citation>
    <scope>NUCLEOTIDE SEQUENCE [LARGE SCALE MRNA]</scope>
    <scope>VARIANT ASN-107</scope>
    <source>
        <tissue>Liver</tissue>
    </source>
</reference>
<reference key="8">
    <citation type="submission" date="2003-06" db="EMBL/GenBank/DDBJ databases">
        <authorList>
            <consortium name="SeattleSNPs variation discovery resource"/>
        </authorList>
    </citation>
    <scope>NUCLEOTIDE SEQUENCE [GENOMIC DNA]</scope>
    <scope>VARIANTS ASN-107; HIS-154; LEU-266 AND SER-335</scope>
</reference>
<reference key="9">
    <citation type="journal article" date="2004" name="Genome Res.">
        <title>The status, quality, and expansion of the NIH full-length cDNA project: the Mammalian Gene Collection (MGC).</title>
        <authorList>
            <consortium name="The MGC Project Team"/>
        </authorList>
    </citation>
    <scope>NUCLEOTIDE SEQUENCE [LARGE SCALE MRNA]</scope>
    <source>
        <tissue>Liver</tissue>
    </source>
</reference>
<reference key="10">
    <citation type="journal article" date="1984" name="Proc. Natl. Acad. Sci. U.S.A.">
        <title>Complete amino acid sequence of human plasma beta 2-glycoprotein I.</title>
        <authorList>
            <person name="Lozier J."/>
            <person name="Takahashi N."/>
            <person name="Putnam F.W."/>
        </authorList>
    </citation>
    <scope>PROTEIN SEQUENCE OF 20-345</scope>
    <scope>GLYCOSYLATION AT ASN-162; ASN-183; ASN-193 AND ASN-253</scope>
    <scope>DISULFIDE BONDS</scope>
</reference>
<reference key="11">
    <citation type="journal article" date="1992" name="J. Immunol.">
        <title>Heterogeneity of anticardiolipin antibodies defined by the anticardiolipin cofactor.</title>
        <authorList>
            <person name="Matsuura E."/>
            <person name="Igarashi Y."/>
            <person name="Fujimoto M."/>
            <person name="Ichikawa K."/>
            <person name="Suzuki T."/>
            <person name="Sumida T."/>
            <person name="Yasuda T."/>
            <person name="Koike T."/>
        </authorList>
    </citation>
    <scope>PROTEIN SEQUENCE OF 20-44</scope>
</reference>
<reference key="12">
    <citation type="journal article" date="1990" name="Proc. Natl. Acad. Sci. U.S.A.">
        <title>Anti-phospholipid antibodies are directed against a complex antigen that includes a lipid-binding inhibitor of coagulation: beta 2-glycoprotein I (apolipoprotein H).</title>
        <authorList>
            <person name="McNeil H.P."/>
            <person name="Simpson R.J."/>
            <person name="Chesterman C.N."/>
            <person name="Krilis S.A."/>
        </authorList>
    </citation>
    <scope>PROTEIN SEQUENCE OF 20-43</scope>
</reference>
<reference key="13">
    <citation type="journal article" date="2001" name="Comp. Biochem. Physiol.">
        <title>Purification of apolipoprotein H (beta 2-glycoprotein I)-like protein from human follicular fluid.</title>
        <authorList>
            <person name="Aleporou-Marinou V."/>
            <person name="Pappa H."/>
            <person name="Yalouris P."/>
            <person name="Patargias T."/>
        </authorList>
    </citation>
    <scope>PROTEIN SEQUENCE OF 20-38</scope>
    <source>
        <tissue>Ovarian follicular fluid</tissue>
    </source>
</reference>
<reference key="14">
    <citation type="journal article" date="1992" name="FEBS Lett.">
        <title>Activity, disulphide mapping and structural modelling of the fifth domain of human beta 2-glycoprotein I.</title>
        <authorList>
            <person name="Steinkkasserer A."/>
            <person name="Barlow P.N."/>
            <person name="Willis A.C."/>
            <person name="Kertesz Z."/>
            <person name="Campbell I.D."/>
            <person name="Sim R.B."/>
            <person name="Norman D.G."/>
        </authorList>
    </citation>
    <scope>DISULFIDE BONDS IN C-TERMINAL DOMAIN</scope>
</reference>
<reference key="15">
    <citation type="journal article" date="1997" name="J. Protein Chem.">
        <title>Qualitative analysis of the carbohydrate composition of apolipoprotein H.</title>
        <authorList>
            <person name="Gambino R."/>
            <person name="Ruiu G."/>
            <person name="Pagano G."/>
            <person name="Cassader M."/>
        </authorList>
    </citation>
    <scope>STRUCTURE OF CARBOHYDRATES</scope>
</reference>
<reference key="16">
    <citation type="journal article" date="2004" name="Mol. Cell. Proteomics">
        <title>A proteomic analysis of human bile.</title>
        <authorList>
            <person name="Kristiansen T.Z."/>
            <person name="Bunkenborg J."/>
            <person name="Gronborg M."/>
            <person name="Molina H."/>
            <person name="Thuluvath P.J."/>
            <person name="Argani P."/>
            <person name="Goggins M.G."/>
            <person name="Maitra A."/>
            <person name="Pandey A."/>
        </authorList>
    </citation>
    <scope>GLYCOSYLATION [LARGE SCALE ANALYSIS] AT ASN-162 AND ASN-253</scope>
    <source>
        <tissue>Bile</tissue>
    </source>
</reference>
<reference key="17">
    <citation type="journal article" date="2004" name="Proteomics">
        <title>Screening for N-glycosylated proteins by liquid chromatography mass spectrometry.</title>
        <authorList>
            <person name="Bunkenborg J."/>
            <person name="Pilch B.J."/>
            <person name="Podtelejnikov A.V."/>
            <person name="Wisniewski J.R."/>
        </authorList>
    </citation>
    <scope>GLYCOSYLATION [LARGE SCALE ANALYSIS] AT ASN-162; ASN-183 AND ASN-193</scope>
    <source>
        <tissue>Plasma</tissue>
    </source>
</reference>
<reference key="18">
    <citation type="journal article" date="2005" name="J. Proteome Res.">
        <title>Human plasma N-glycoproteome analysis by immunoaffinity subtraction, hydrazide chemistry, and mass spectrometry.</title>
        <authorList>
            <person name="Liu T."/>
            <person name="Qian W.-J."/>
            <person name="Gritsenko M.A."/>
            <person name="Camp D.G. II"/>
            <person name="Monroe M.E."/>
            <person name="Moore R.J."/>
            <person name="Smith R.D."/>
        </authorList>
    </citation>
    <scope>GLYCOSYLATION [LARGE SCALE ANALYSIS] AT ASN-162; ASN-183; ASN-193 AND ASN-253</scope>
    <source>
        <tissue>Plasma</tissue>
    </source>
</reference>
<reference key="19">
    <citation type="journal article" date="2006" name="J. Proteome Res.">
        <title>Identification of N-linked glycoproteins in human saliva by glycoprotein capture and mass spectrometry.</title>
        <authorList>
            <person name="Ramachandran P."/>
            <person name="Boontheung P."/>
            <person name="Xie Y."/>
            <person name="Sondej M."/>
            <person name="Wong D.T."/>
            <person name="Loo J.A."/>
        </authorList>
    </citation>
    <scope>GLYCOSYLATION [LARGE SCALE ANALYSIS] AT ASN-162 AND ASN-253</scope>
    <source>
        <tissue>Saliva</tissue>
    </source>
</reference>
<reference key="20">
    <citation type="journal article" date="2009" name="J. Proteome Res.">
        <title>Glycoproteomics analysis of human liver tissue by combination of multiple enzyme digestion and hydrazide chemistry.</title>
        <authorList>
            <person name="Chen R."/>
            <person name="Jiang X."/>
            <person name="Sun D."/>
            <person name="Han G."/>
            <person name="Wang F."/>
            <person name="Ye M."/>
            <person name="Wang L."/>
            <person name="Zou H."/>
        </authorList>
    </citation>
    <scope>GLYCOSYLATION [LARGE SCALE ANALYSIS] AT ASN-162; ASN-183; ASN-193 AND ASN-253</scope>
    <source>
        <tissue>Liver</tissue>
    </source>
</reference>
<reference key="21">
    <citation type="journal article" date="2009" name="Mol. Cell. Proteomics">
        <title>A strategy for precise and large scale identification of core fucosylated glycoproteins.</title>
        <authorList>
            <person name="Jia W."/>
            <person name="Lu Z."/>
            <person name="Fu Y."/>
            <person name="Wang H.P."/>
            <person name="Wang L.H."/>
            <person name="Chi H."/>
            <person name="Yuan Z.F."/>
            <person name="Zheng Z.B."/>
            <person name="Song L.N."/>
            <person name="Han H.H."/>
            <person name="Liang Y.M."/>
            <person name="Wang J.L."/>
            <person name="Cai Y."/>
            <person name="Zhang Y.K."/>
            <person name="Deng Y.L."/>
            <person name="Ying W.T."/>
            <person name="He S.M."/>
            <person name="Qian X.H."/>
        </authorList>
    </citation>
    <scope>GLYCOSYLATION AT ASN-162</scope>
</reference>
<reference key="22">
    <citation type="journal article" date="2009" name="Nat. Methods">
        <title>Enrichment of glycopeptides for glycan structure and attachment site identification.</title>
        <authorList>
            <person name="Nilsson J."/>
            <person name="Rueetschi U."/>
            <person name="Halim A."/>
            <person name="Hesse C."/>
            <person name="Carlsohn E."/>
            <person name="Brinkmalm G."/>
            <person name="Larson G."/>
        </authorList>
    </citation>
    <scope>GLYCOSYLATION [LARGE SCALE ANALYSIS] AT ASN-162</scope>
    <scope>STRUCTURE OF CARBOHYDRATES</scope>
    <source>
        <tissue>Cerebrospinal fluid</tissue>
    </source>
</reference>
<reference key="23">
    <citation type="journal article" date="2011" name="BMC Syst. Biol.">
        <title>Initial characterization of the human central proteome.</title>
        <authorList>
            <person name="Burkard T.R."/>
            <person name="Planyavsky M."/>
            <person name="Kaupe I."/>
            <person name="Breitwieser F.P."/>
            <person name="Buerckstuemmer T."/>
            <person name="Bennett K.L."/>
            <person name="Superti-Furga G."/>
            <person name="Colinge J."/>
        </authorList>
    </citation>
    <scope>IDENTIFICATION BY MASS SPECTROMETRY [LARGE SCALE ANALYSIS]</scope>
</reference>
<reference key="24">
    <citation type="journal article" date="2014" name="J. Proteomics">
        <title>An enzyme assisted RP-RPLC approach for in-depth analysis of human liver phosphoproteome.</title>
        <authorList>
            <person name="Bian Y."/>
            <person name="Song C."/>
            <person name="Cheng K."/>
            <person name="Dong M."/>
            <person name="Wang F."/>
            <person name="Huang J."/>
            <person name="Sun D."/>
            <person name="Wang L."/>
            <person name="Ye M."/>
            <person name="Zou H."/>
        </authorList>
    </citation>
    <scope>IDENTIFICATION BY MASS SPECTROMETRY [LARGE SCALE ANALYSIS]</scope>
    <source>
        <tissue>Liver</tissue>
    </source>
</reference>
<reference key="25">
    <citation type="journal article" date="1999" name="EMBO J.">
        <title>Adhesion mechanism of human beta(2)-glycoprotein I to phospholipids based on its crystal structure.</title>
        <authorList>
            <person name="Bouma B."/>
            <person name="de Groot P.G."/>
            <person name="van Den Elsen J.M.H."/>
            <person name="Ravelli R.B.G."/>
            <person name="Schouten A."/>
            <person name="Simmelink M.J.A."/>
            <person name="Derksen R.H.W.M."/>
            <person name="Kroon J."/>
            <person name="Gros P."/>
        </authorList>
    </citation>
    <scope>X-RAY CRYSTALLOGRAPHY (2.7 ANGSTROMS)</scope>
    <source>
        <tissue>Plasma</tissue>
    </source>
</reference>
<reference key="26">
    <citation type="journal article" date="1999" name="EMBO J.">
        <title>Crystal structure of human beta2-glycoprotein I: implications for phospholipid binding and the antiphospholipid syndrome.</title>
        <authorList>
            <person name="Schwarzenbacher R."/>
            <person name="Zeth K."/>
            <person name="Diederichs K."/>
            <person name="Gries A."/>
            <person name="Kostner G.M."/>
            <person name="Laggner P."/>
            <person name="Prassl R."/>
        </authorList>
    </citation>
    <scope>X-RAY CRYSTALLOGRAPHY (2.87 ANGSTROMS)</scope>
</reference>
<reference key="27">
    <citation type="journal article" date="1993" name="Hum. Genet.">
        <title>Human beta 2-glycoprotein I: molecular analysis of DNA and amino acid polymorphism.</title>
        <authorList>
            <person name="Steinkasserer A."/>
            <person name="Doerner C."/>
            <person name="Wuerzner R."/>
            <person name="Sim R.B."/>
        </authorList>
    </citation>
    <scope>VARIANT LEU-266</scope>
</reference>
<reference key="28">
    <citation type="journal article" date="1997" name="Hum. Genet.">
        <title>Molecular basis of the apolipoprotein H (beta 2-glycoprotein I) protein polymorphism.</title>
        <authorList>
            <person name="Sanghera D.K."/>
            <person name="Kristensen T."/>
            <person name="Hamman R.F."/>
            <person name="Kamboh M.I."/>
        </authorList>
    </citation>
    <scope>VARIANT ASN-107</scope>
</reference>
<reference key="29">
    <citation type="journal article" date="1997" name="Hum. Mol. Genet.">
        <title>Identification of structural mutations in the fifth domain of apolipoprotein H (beta-2-glycoprotein I) which affect phospholipid binding.</title>
        <authorList>
            <person name="Sanghera D.K."/>
            <person name="Wagenknecht D.R."/>
            <person name="McIntyre J.A."/>
            <person name="Kamboh M.I."/>
        </authorList>
    </citation>
    <scope>VARIANTS GLY-325 AND SER-335</scope>
</reference>